<sequence length="129" mass="13786">MARKTNTRKRRVKKNIESGIAHIRSTFNNTIVMITDTHGNALAWSSAGSLGFKGSRKSTPFAAQMAAESAAKSAQEHGLKTLEVTVKGPGSGREAAIRALQAAGLEVTAIKDVTPVPHNGCRPPKRRRV</sequence>
<gene>
    <name evidence="1" type="primary">rpsK</name>
    <name type="ordered locus">lmo2607</name>
</gene>
<comment type="function">
    <text evidence="1">Located on the platform of the 30S subunit, it bridges several disparate RNA helices of the 16S rRNA. Forms part of the Shine-Dalgarno cleft in the 70S ribosome.</text>
</comment>
<comment type="subunit">
    <text evidence="1">Part of the 30S ribosomal subunit. Interacts with proteins S7 and S18. Binds to IF-3.</text>
</comment>
<comment type="similarity">
    <text evidence="1">Belongs to the universal ribosomal protein uS11 family.</text>
</comment>
<proteinExistence type="evidence at protein level"/>
<evidence type="ECO:0000255" key="1">
    <source>
        <dbReference type="HAMAP-Rule" id="MF_01310"/>
    </source>
</evidence>
<evidence type="ECO:0000305" key="2"/>
<organism>
    <name type="scientific">Listeria monocytogenes serovar 1/2a (strain ATCC BAA-679 / EGD-e)</name>
    <dbReference type="NCBI Taxonomy" id="169963"/>
    <lineage>
        <taxon>Bacteria</taxon>
        <taxon>Bacillati</taxon>
        <taxon>Bacillota</taxon>
        <taxon>Bacilli</taxon>
        <taxon>Bacillales</taxon>
        <taxon>Listeriaceae</taxon>
        <taxon>Listeria</taxon>
    </lineage>
</organism>
<protein>
    <recommendedName>
        <fullName evidence="1">Small ribosomal subunit protein uS11</fullName>
    </recommendedName>
    <alternativeName>
        <fullName evidence="2">30S ribosomal protein S11</fullName>
    </alternativeName>
</protein>
<name>RS11_LISMO</name>
<keyword id="KW-0002">3D-structure</keyword>
<keyword id="KW-1185">Reference proteome</keyword>
<keyword id="KW-0687">Ribonucleoprotein</keyword>
<keyword id="KW-0689">Ribosomal protein</keyword>
<keyword id="KW-0694">RNA-binding</keyword>
<keyword id="KW-0699">rRNA-binding</keyword>
<dbReference type="EMBL" id="AL591983">
    <property type="protein sequence ID" value="CAD00685.1"/>
    <property type="molecule type" value="Genomic_DNA"/>
</dbReference>
<dbReference type="PIR" id="AG1400">
    <property type="entry name" value="AG1400"/>
</dbReference>
<dbReference type="RefSeq" id="NP_466130.1">
    <property type="nucleotide sequence ID" value="NC_003210.1"/>
</dbReference>
<dbReference type="RefSeq" id="WP_003720926.1">
    <property type="nucleotide sequence ID" value="NZ_CP149495.1"/>
</dbReference>
<dbReference type="PDB" id="7NHN">
    <property type="method" value="EM"/>
    <property type="resolution" value="2.90 A"/>
    <property type="chains" value="l=1-129"/>
</dbReference>
<dbReference type="PDBsum" id="7NHN"/>
<dbReference type="EMDB" id="EMD-12334"/>
<dbReference type="SMR" id="P66352"/>
<dbReference type="STRING" id="169963.gene:17595325"/>
<dbReference type="PaxDb" id="169963-lmo2607"/>
<dbReference type="EnsemblBacteria" id="CAD00685">
    <property type="protein sequence ID" value="CAD00685"/>
    <property type="gene ID" value="CAD00685"/>
</dbReference>
<dbReference type="GeneID" id="93240488"/>
<dbReference type="GeneID" id="985385"/>
<dbReference type="KEGG" id="lmo:lmo2607"/>
<dbReference type="PATRIC" id="fig|169963.11.peg.2671"/>
<dbReference type="eggNOG" id="COG0100">
    <property type="taxonomic scope" value="Bacteria"/>
</dbReference>
<dbReference type="HOGENOM" id="CLU_072439_5_0_9"/>
<dbReference type="OrthoDB" id="9806415at2"/>
<dbReference type="PhylomeDB" id="P66352"/>
<dbReference type="BioCyc" id="LMON169963:LMO2607-MONOMER"/>
<dbReference type="Proteomes" id="UP000000817">
    <property type="component" value="Chromosome"/>
</dbReference>
<dbReference type="GO" id="GO:0022627">
    <property type="term" value="C:cytosolic small ribosomal subunit"/>
    <property type="evidence" value="ECO:0000318"/>
    <property type="project" value="GO_Central"/>
</dbReference>
<dbReference type="GO" id="GO:0019843">
    <property type="term" value="F:rRNA binding"/>
    <property type="evidence" value="ECO:0007669"/>
    <property type="project" value="UniProtKB-UniRule"/>
</dbReference>
<dbReference type="GO" id="GO:0003735">
    <property type="term" value="F:structural constituent of ribosome"/>
    <property type="evidence" value="ECO:0000318"/>
    <property type="project" value="GO_Central"/>
</dbReference>
<dbReference type="GO" id="GO:0006412">
    <property type="term" value="P:translation"/>
    <property type="evidence" value="ECO:0000318"/>
    <property type="project" value="GO_Central"/>
</dbReference>
<dbReference type="FunFam" id="3.30.420.80:FF:000001">
    <property type="entry name" value="30S ribosomal protein S11"/>
    <property type="match status" value="1"/>
</dbReference>
<dbReference type="Gene3D" id="3.30.420.80">
    <property type="entry name" value="Ribosomal protein S11"/>
    <property type="match status" value="1"/>
</dbReference>
<dbReference type="HAMAP" id="MF_01310">
    <property type="entry name" value="Ribosomal_uS11"/>
    <property type="match status" value="1"/>
</dbReference>
<dbReference type="InterPro" id="IPR001971">
    <property type="entry name" value="Ribosomal_uS11"/>
</dbReference>
<dbReference type="InterPro" id="IPR019981">
    <property type="entry name" value="Ribosomal_uS11_bac-type"/>
</dbReference>
<dbReference type="InterPro" id="IPR018102">
    <property type="entry name" value="Ribosomal_uS11_CS"/>
</dbReference>
<dbReference type="InterPro" id="IPR036967">
    <property type="entry name" value="Ribosomal_uS11_sf"/>
</dbReference>
<dbReference type="NCBIfam" id="NF003698">
    <property type="entry name" value="PRK05309.1"/>
    <property type="match status" value="1"/>
</dbReference>
<dbReference type="NCBIfam" id="TIGR03632">
    <property type="entry name" value="uS11_bact"/>
    <property type="match status" value="1"/>
</dbReference>
<dbReference type="PANTHER" id="PTHR11759">
    <property type="entry name" value="40S RIBOSOMAL PROTEIN S14/30S RIBOSOMAL PROTEIN S11"/>
    <property type="match status" value="1"/>
</dbReference>
<dbReference type="Pfam" id="PF00411">
    <property type="entry name" value="Ribosomal_S11"/>
    <property type="match status" value="1"/>
</dbReference>
<dbReference type="PIRSF" id="PIRSF002131">
    <property type="entry name" value="Ribosomal_S11"/>
    <property type="match status" value="1"/>
</dbReference>
<dbReference type="SUPFAM" id="SSF53137">
    <property type="entry name" value="Translational machinery components"/>
    <property type="match status" value="1"/>
</dbReference>
<dbReference type="PROSITE" id="PS00054">
    <property type="entry name" value="RIBOSOMAL_S11"/>
    <property type="match status" value="1"/>
</dbReference>
<reference key="1">
    <citation type="journal article" date="2001" name="Science">
        <title>Comparative genomics of Listeria species.</title>
        <authorList>
            <person name="Glaser P."/>
            <person name="Frangeul L."/>
            <person name="Buchrieser C."/>
            <person name="Rusniok C."/>
            <person name="Amend A."/>
            <person name="Baquero F."/>
            <person name="Berche P."/>
            <person name="Bloecker H."/>
            <person name="Brandt P."/>
            <person name="Chakraborty T."/>
            <person name="Charbit A."/>
            <person name="Chetouani F."/>
            <person name="Couve E."/>
            <person name="de Daruvar A."/>
            <person name="Dehoux P."/>
            <person name="Domann E."/>
            <person name="Dominguez-Bernal G."/>
            <person name="Duchaud E."/>
            <person name="Durant L."/>
            <person name="Dussurget O."/>
            <person name="Entian K.-D."/>
            <person name="Fsihi H."/>
            <person name="Garcia-del Portillo F."/>
            <person name="Garrido P."/>
            <person name="Gautier L."/>
            <person name="Goebel W."/>
            <person name="Gomez-Lopez N."/>
            <person name="Hain T."/>
            <person name="Hauf J."/>
            <person name="Jackson D."/>
            <person name="Jones L.-M."/>
            <person name="Kaerst U."/>
            <person name="Kreft J."/>
            <person name="Kuhn M."/>
            <person name="Kunst F."/>
            <person name="Kurapkat G."/>
            <person name="Madueno E."/>
            <person name="Maitournam A."/>
            <person name="Mata Vicente J."/>
            <person name="Ng E."/>
            <person name="Nedjari H."/>
            <person name="Nordsiek G."/>
            <person name="Novella S."/>
            <person name="de Pablos B."/>
            <person name="Perez-Diaz J.-C."/>
            <person name="Purcell R."/>
            <person name="Remmel B."/>
            <person name="Rose M."/>
            <person name="Schlueter T."/>
            <person name="Simoes N."/>
            <person name="Tierrez A."/>
            <person name="Vazquez-Boland J.-A."/>
            <person name="Voss H."/>
            <person name="Wehland J."/>
            <person name="Cossart P."/>
        </authorList>
    </citation>
    <scope>NUCLEOTIDE SEQUENCE [LARGE SCALE GENOMIC DNA]</scope>
    <source>
        <strain>ATCC BAA-679 / EGD-e</strain>
    </source>
</reference>
<feature type="chain" id="PRO_0000123170" description="Small ribosomal subunit protein uS11">
    <location>
        <begin position="1"/>
        <end position="129"/>
    </location>
</feature>
<accession>P66352</accession>
<accession>Q927N2</accession>